<accession>Q6GGD4</accession>
<comment type="function">
    <text evidence="1">Involved in DNA repair and RecF pathway recombination.</text>
</comment>
<comment type="similarity">
    <text evidence="1">Belongs to the RecO family.</text>
</comment>
<sequence length="250" mass="28468">MLMRQKGIIIKAVDYGESDKIITILNEHGAKVPLMARRAKKVKTGLQAQTQLFVYGLFIYNKWRGMGTLNSVDVISQHYKLQMDLYVSSYASLAAETIERSMDEGDVAPYNYQLLQFVLEKIESGTSAQLMSVVVMLKCMKRFGFTASFNRCAVSGNDTQADLIGYSFKYDGAISRQEASKDVHAVILSNKTLYLLDVLQKLPIDKMNSLNIHQEIIDEMSDIILMLYREYAGMFFKSQKLINQLKRLEQ</sequence>
<keyword id="KW-0227">DNA damage</keyword>
<keyword id="KW-0233">DNA recombination</keyword>
<keyword id="KW-0234">DNA repair</keyword>
<proteinExistence type="inferred from homology"/>
<dbReference type="EMBL" id="BX571856">
    <property type="protein sequence ID" value="CAG40638.1"/>
    <property type="molecule type" value="Genomic_DNA"/>
</dbReference>
<dbReference type="SMR" id="Q6GGD4"/>
<dbReference type="KEGG" id="sar:SAR1643"/>
<dbReference type="HOGENOM" id="CLU_066632_4_0_9"/>
<dbReference type="Proteomes" id="UP000000596">
    <property type="component" value="Chromosome"/>
</dbReference>
<dbReference type="GO" id="GO:0043590">
    <property type="term" value="C:bacterial nucleoid"/>
    <property type="evidence" value="ECO:0007669"/>
    <property type="project" value="TreeGrafter"/>
</dbReference>
<dbReference type="GO" id="GO:0006310">
    <property type="term" value="P:DNA recombination"/>
    <property type="evidence" value="ECO:0007669"/>
    <property type="project" value="UniProtKB-UniRule"/>
</dbReference>
<dbReference type="GO" id="GO:0006302">
    <property type="term" value="P:double-strand break repair"/>
    <property type="evidence" value="ECO:0007669"/>
    <property type="project" value="TreeGrafter"/>
</dbReference>
<dbReference type="Gene3D" id="2.40.50.140">
    <property type="entry name" value="Nucleic acid-binding proteins"/>
    <property type="match status" value="1"/>
</dbReference>
<dbReference type="Gene3D" id="1.20.1440.120">
    <property type="entry name" value="Recombination protein O, C-terminal domain"/>
    <property type="match status" value="1"/>
</dbReference>
<dbReference type="HAMAP" id="MF_00201">
    <property type="entry name" value="RecO"/>
    <property type="match status" value="1"/>
</dbReference>
<dbReference type="InterPro" id="IPR037278">
    <property type="entry name" value="ARFGAP/RecO"/>
</dbReference>
<dbReference type="InterPro" id="IPR022572">
    <property type="entry name" value="DNA_rep/recomb_RecO_N"/>
</dbReference>
<dbReference type="InterPro" id="IPR012340">
    <property type="entry name" value="NA-bd_OB-fold"/>
</dbReference>
<dbReference type="InterPro" id="IPR003717">
    <property type="entry name" value="RecO"/>
</dbReference>
<dbReference type="InterPro" id="IPR042242">
    <property type="entry name" value="RecO_C"/>
</dbReference>
<dbReference type="NCBIfam" id="TIGR00613">
    <property type="entry name" value="reco"/>
    <property type="match status" value="1"/>
</dbReference>
<dbReference type="PANTHER" id="PTHR33991">
    <property type="entry name" value="DNA REPAIR PROTEIN RECO"/>
    <property type="match status" value="1"/>
</dbReference>
<dbReference type="PANTHER" id="PTHR33991:SF1">
    <property type="entry name" value="DNA REPAIR PROTEIN RECO"/>
    <property type="match status" value="1"/>
</dbReference>
<dbReference type="Pfam" id="PF02565">
    <property type="entry name" value="RecO_C"/>
    <property type="match status" value="1"/>
</dbReference>
<dbReference type="Pfam" id="PF11967">
    <property type="entry name" value="RecO_N"/>
    <property type="match status" value="1"/>
</dbReference>
<dbReference type="SUPFAM" id="SSF57863">
    <property type="entry name" value="ArfGap/RecO-like zinc finger"/>
    <property type="match status" value="1"/>
</dbReference>
<dbReference type="SUPFAM" id="SSF50249">
    <property type="entry name" value="Nucleic acid-binding proteins"/>
    <property type="match status" value="1"/>
</dbReference>
<feature type="chain" id="PRO_0000204998" description="DNA repair protein RecO">
    <location>
        <begin position="1"/>
        <end position="250"/>
    </location>
</feature>
<gene>
    <name evidence="1" type="primary">recO</name>
    <name type="ordered locus">SAR1643</name>
</gene>
<organism>
    <name type="scientific">Staphylococcus aureus (strain MRSA252)</name>
    <dbReference type="NCBI Taxonomy" id="282458"/>
    <lineage>
        <taxon>Bacteria</taxon>
        <taxon>Bacillati</taxon>
        <taxon>Bacillota</taxon>
        <taxon>Bacilli</taxon>
        <taxon>Bacillales</taxon>
        <taxon>Staphylococcaceae</taxon>
        <taxon>Staphylococcus</taxon>
    </lineage>
</organism>
<protein>
    <recommendedName>
        <fullName evidence="1">DNA repair protein RecO</fullName>
    </recommendedName>
    <alternativeName>
        <fullName evidence="1">Recombination protein O</fullName>
    </alternativeName>
</protein>
<reference key="1">
    <citation type="journal article" date="2004" name="Proc. Natl. Acad. Sci. U.S.A.">
        <title>Complete genomes of two clinical Staphylococcus aureus strains: evidence for the rapid evolution of virulence and drug resistance.</title>
        <authorList>
            <person name="Holden M.T.G."/>
            <person name="Feil E.J."/>
            <person name="Lindsay J.A."/>
            <person name="Peacock S.J."/>
            <person name="Day N.P.J."/>
            <person name="Enright M.C."/>
            <person name="Foster T.J."/>
            <person name="Moore C.E."/>
            <person name="Hurst L."/>
            <person name="Atkin R."/>
            <person name="Barron A."/>
            <person name="Bason N."/>
            <person name="Bentley S.D."/>
            <person name="Chillingworth C."/>
            <person name="Chillingworth T."/>
            <person name="Churcher C."/>
            <person name="Clark L."/>
            <person name="Corton C."/>
            <person name="Cronin A."/>
            <person name="Doggett J."/>
            <person name="Dowd L."/>
            <person name="Feltwell T."/>
            <person name="Hance Z."/>
            <person name="Harris B."/>
            <person name="Hauser H."/>
            <person name="Holroyd S."/>
            <person name="Jagels K."/>
            <person name="James K.D."/>
            <person name="Lennard N."/>
            <person name="Line A."/>
            <person name="Mayes R."/>
            <person name="Moule S."/>
            <person name="Mungall K."/>
            <person name="Ormond D."/>
            <person name="Quail M.A."/>
            <person name="Rabbinowitsch E."/>
            <person name="Rutherford K.M."/>
            <person name="Sanders M."/>
            <person name="Sharp S."/>
            <person name="Simmonds M."/>
            <person name="Stevens K."/>
            <person name="Whitehead S."/>
            <person name="Barrell B.G."/>
            <person name="Spratt B.G."/>
            <person name="Parkhill J."/>
        </authorList>
    </citation>
    <scope>NUCLEOTIDE SEQUENCE [LARGE SCALE GENOMIC DNA]</scope>
    <source>
        <strain>MRSA252</strain>
    </source>
</reference>
<evidence type="ECO:0000255" key="1">
    <source>
        <dbReference type="HAMAP-Rule" id="MF_00201"/>
    </source>
</evidence>
<name>RECO_STAAR</name>